<feature type="initiator methionine" description="Removed" evidence="1">
    <location>
        <position position="1"/>
    </location>
</feature>
<feature type="chain" id="PRO_0000101894" description="UDP-N-acetylmuramoyl-L-alanyl-D-glutamate--2,6-diaminopimelate ligase">
    <location>
        <begin position="2"/>
        <end position="495"/>
    </location>
</feature>
<feature type="short sequence motif" description="Meso-diaminopimelate recognition motif">
    <location>
        <begin position="414"/>
        <end position="417"/>
    </location>
</feature>
<feature type="binding site" evidence="2">
    <location>
        <position position="27"/>
    </location>
    <ligand>
        <name>UDP-N-acetyl-alpha-D-muramoyl-L-alanyl-D-glutamate</name>
        <dbReference type="ChEBI" id="CHEBI:83900"/>
    </ligand>
</feature>
<feature type="binding site" evidence="2">
    <location>
        <position position="29"/>
    </location>
    <ligand>
        <name>UDP-N-acetyl-alpha-D-muramoyl-L-alanyl-D-glutamate</name>
        <dbReference type="ChEBI" id="CHEBI:83900"/>
    </ligand>
</feature>
<feature type="binding site" evidence="2">
    <location>
        <begin position="44"/>
        <end position="46"/>
    </location>
    <ligand>
        <name>UDP-N-acetyl-alpha-D-muramoyl-L-alanyl-D-glutamate</name>
        <dbReference type="ChEBI" id="CHEBI:83900"/>
    </ligand>
</feature>
<feature type="binding site" evidence="2">
    <location>
        <begin position="116"/>
        <end position="122"/>
    </location>
    <ligand>
        <name>ATP</name>
        <dbReference type="ChEBI" id="CHEBI:30616"/>
    </ligand>
</feature>
<feature type="binding site" evidence="2">
    <location>
        <position position="157"/>
    </location>
    <ligand>
        <name>UDP-N-acetyl-alpha-D-muramoyl-L-alanyl-D-glutamate</name>
        <dbReference type="ChEBI" id="CHEBI:83900"/>
    </ligand>
</feature>
<feature type="binding site" evidence="2">
    <location>
        <begin position="158"/>
        <end position="159"/>
    </location>
    <ligand>
        <name>UDP-N-acetyl-alpha-D-muramoyl-L-alanyl-D-glutamate</name>
        <dbReference type="ChEBI" id="CHEBI:83900"/>
    </ligand>
</feature>
<feature type="binding site" evidence="2">
    <location>
        <position position="185"/>
    </location>
    <ligand>
        <name>UDP-N-acetyl-alpha-D-muramoyl-L-alanyl-D-glutamate</name>
        <dbReference type="ChEBI" id="CHEBI:83900"/>
    </ligand>
</feature>
<feature type="binding site" evidence="2">
    <location>
        <position position="191"/>
    </location>
    <ligand>
        <name>UDP-N-acetyl-alpha-D-muramoyl-L-alanyl-D-glutamate</name>
        <dbReference type="ChEBI" id="CHEBI:83900"/>
    </ligand>
</feature>
<feature type="binding site" evidence="2">
    <location>
        <position position="193"/>
    </location>
    <ligand>
        <name>UDP-N-acetyl-alpha-D-muramoyl-L-alanyl-D-glutamate</name>
        <dbReference type="ChEBI" id="CHEBI:83900"/>
    </ligand>
</feature>
<feature type="binding site" evidence="2">
    <location>
        <position position="390"/>
    </location>
    <ligand>
        <name>meso-2,6-diaminopimelate</name>
        <dbReference type="ChEBI" id="CHEBI:57791"/>
    </ligand>
</feature>
<feature type="binding site" evidence="2">
    <location>
        <begin position="414"/>
        <end position="417"/>
    </location>
    <ligand>
        <name>meso-2,6-diaminopimelate</name>
        <dbReference type="ChEBI" id="CHEBI:57791"/>
    </ligand>
</feature>
<feature type="binding site" evidence="2">
    <location>
        <position position="465"/>
    </location>
    <ligand>
        <name>meso-2,6-diaminopimelate</name>
        <dbReference type="ChEBI" id="CHEBI:57791"/>
    </ligand>
</feature>
<feature type="binding site" evidence="2">
    <location>
        <position position="469"/>
    </location>
    <ligand>
        <name>meso-2,6-diaminopimelate</name>
        <dbReference type="ChEBI" id="CHEBI:57791"/>
    </ligand>
</feature>
<feature type="modified residue" description="N6-carboxylysine" evidence="2">
    <location>
        <position position="225"/>
    </location>
</feature>
<protein>
    <recommendedName>
        <fullName evidence="2">UDP-N-acetylmuramoyl-L-alanyl-D-glutamate--2,6-diaminopimelate ligase</fullName>
        <ecNumber evidence="2">6.3.2.13</ecNumber>
    </recommendedName>
    <alternativeName>
        <fullName evidence="2">Meso-A2pm-adding enzyme</fullName>
    </alternativeName>
    <alternativeName>
        <fullName evidence="2">Meso-diaminopimelate-adding enzyme</fullName>
    </alternativeName>
    <alternativeName>
        <fullName evidence="2">UDP-MurNAc-L-Ala-D-Glu:meso-diaminopimelate ligase</fullName>
    </alternativeName>
    <alternativeName>
        <fullName evidence="2">UDP-MurNAc-tripeptide synthetase</fullName>
    </alternativeName>
    <alternativeName>
        <fullName evidence="2">UDP-N-acetylmuramyl-tripeptide synthetase</fullName>
    </alternativeName>
</protein>
<evidence type="ECO:0000250" key="1"/>
<evidence type="ECO:0000255" key="2">
    <source>
        <dbReference type="HAMAP-Rule" id="MF_00208"/>
    </source>
</evidence>
<proteinExistence type="inferred from homology"/>
<gene>
    <name evidence="2" type="primary">murE</name>
    <name type="ordered locus">c0103</name>
</gene>
<organism>
    <name type="scientific">Escherichia coli O6:H1 (strain CFT073 / ATCC 700928 / UPEC)</name>
    <dbReference type="NCBI Taxonomy" id="199310"/>
    <lineage>
        <taxon>Bacteria</taxon>
        <taxon>Pseudomonadati</taxon>
        <taxon>Pseudomonadota</taxon>
        <taxon>Gammaproteobacteria</taxon>
        <taxon>Enterobacterales</taxon>
        <taxon>Enterobacteriaceae</taxon>
        <taxon>Escherichia</taxon>
    </lineage>
</organism>
<name>MURE_ECOL6</name>
<comment type="function">
    <text evidence="2">Catalyzes the addition of meso-diaminopimelic acid to the nucleotide precursor UDP-N-acetylmuramoyl-L-alanyl-D-glutamate (UMAG) in the biosynthesis of bacterial cell-wall peptidoglycan.</text>
</comment>
<comment type="catalytic activity">
    <reaction evidence="2">
        <text>UDP-N-acetyl-alpha-D-muramoyl-L-alanyl-D-glutamate + meso-2,6-diaminopimelate + ATP = UDP-N-acetyl-alpha-D-muramoyl-L-alanyl-gamma-D-glutamyl-meso-2,6-diaminopimelate + ADP + phosphate + H(+)</text>
        <dbReference type="Rhea" id="RHEA:23676"/>
        <dbReference type="ChEBI" id="CHEBI:15378"/>
        <dbReference type="ChEBI" id="CHEBI:30616"/>
        <dbReference type="ChEBI" id="CHEBI:43474"/>
        <dbReference type="ChEBI" id="CHEBI:57791"/>
        <dbReference type="ChEBI" id="CHEBI:83900"/>
        <dbReference type="ChEBI" id="CHEBI:83905"/>
        <dbReference type="ChEBI" id="CHEBI:456216"/>
        <dbReference type="EC" id="6.3.2.13"/>
    </reaction>
</comment>
<comment type="cofactor">
    <cofactor evidence="2">
        <name>Mg(2+)</name>
        <dbReference type="ChEBI" id="CHEBI:18420"/>
    </cofactor>
</comment>
<comment type="pathway">
    <text evidence="2">Cell wall biogenesis; peptidoglycan biosynthesis.</text>
</comment>
<comment type="subcellular location">
    <subcellularLocation>
        <location evidence="2">Cytoplasm</location>
    </subcellularLocation>
</comment>
<comment type="PTM">
    <text evidence="2">Carboxylation is probably crucial for Mg(2+) binding and, consequently, for the gamma-phosphate positioning of ATP.</text>
</comment>
<comment type="similarity">
    <text evidence="2">Belongs to the MurCDEF family. MurE subfamily.</text>
</comment>
<keyword id="KW-0067">ATP-binding</keyword>
<keyword id="KW-0131">Cell cycle</keyword>
<keyword id="KW-0132">Cell division</keyword>
<keyword id="KW-0133">Cell shape</keyword>
<keyword id="KW-0961">Cell wall biogenesis/degradation</keyword>
<keyword id="KW-0963">Cytoplasm</keyword>
<keyword id="KW-0436">Ligase</keyword>
<keyword id="KW-0460">Magnesium</keyword>
<keyword id="KW-0547">Nucleotide-binding</keyword>
<keyword id="KW-0573">Peptidoglycan synthesis</keyword>
<keyword id="KW-1185">Reference proteome</keyword>
<reference key="1">
    <citation type="journal article" date="2002" name="Proc. Natl. Acad. Sci. U.S.A.">
        <title>Extensive mosaic structure revealed by the complete genome sequence of uropathogenic Escherichia coli.</title>
        <authorList>
            <person name="Welch R.A."/>
            <person name="Burland V."/>
            <person name="Plunkett G. III"/>
            <person name="Redford P."/>
            <person name="Roesch P."/>
            <person name="Rasko D."/>
            <person name="Buckles E.L."/>
            <person name="Liou S.-R."/>
            <person name="Boutin A."/>
            <person name="Hackett J."/>
            <person name="Stroud D."/>
            <person name="Mayhew G.F."/>
            <person name="Rose D.J."/>
            <person name="Zhou S."/>
            <person name="Schwartz D.C."/>
            <person name="Perna N.T."/>
            <person name="Mobley H.L.T."/>
            <person name="Donnenberg M.S."/>
            <person name="Blattner F.R."/>
        </authorList>
    </citation>
    <scope>NUCLEOTIDE SEQUENCE [LARGE SCALE GENOMIC DNA]</scope>
    <source>
        <strain>CFT073 / ATCC 700928 / UPEC</strain>
    </source>
</reference>
<dbReference type="EC" id="6.3.2.13" evidence="2"/>
<dbReference type="EMBL" id="AE014075">
    <property type="protein sequence ID" value="AAN78601.1"/>
    <property type="molecule type" value="Genomic_DNA"/>
</dbReference>
<dbReference type="RefSeq" id="WP_000775094.1">
    <property type="nucleotide sequence ID" value="NZ_CP051263.1"/>
</dbReference>
<dbReference type="SMR" id="Q8FL67"/>
<dbReference type="STRING" id="199310.c0103"/>
<dbReference type="KEGG" id="ecc:c0103"/>
<dbReference type="eggNOG" id="COG0769">
    <property type="taxonomic scope" value="Bacteria"/>
</dbReference>
<dbReference type="HOGENOM" id="CLU_022291_3_2_6"/>
<dbReference type="BioCyc" id="ECOL199310:C0103-MONOMER"/>
<dbReference type="UniPathway" id="UPA00219"/>
<dbReference type="Proteomes" id="UP000001410">
    <property type="component" value="Chromosome"/>
</dbReference>
<dbReference type="GO" id="GO:0005737">
    <property type="term" value="C:cytoplasm"/>
    <property type="evidence" value="ECO:0007669"/>
    <property type="project" value="UniProtKB-SubCell"/>
</dbReference>
<dbReference type="GO" id="GO:0005524">
    <property type="term" value="F:ATP binding"/>
    <property type="evidence" value="ECO:0007669"/>
    <property type="project" value="UniProtKB-UniRule"/>
</dbReference>
<dbReference type="GO" id="GO:0000287">
    <property type="term" value="F:magnesium ion binding"/>
    <property type="evidence" value="ECO:0007669"/>
    <property type="project" value="UniProtKB-UniRule"/>
</dbReference>
<dbReference type="GO" id="GO:0008765">
    <property type="term" value="F:UDP-N-acetylmuramoylalanyl-D-glutamate-2,6-diaminopimelate ligase activity"/>
    <property type="evidence" value="ECO:0007669"/>
    <property type="project" value="UniProtKB-UniRule"/>
</dbReference>
<dbReference type="GO" id="GO:0051301">
    <property type="term" value="P:cell division"/>
    <property type="evidence" value="ECO:0007669"/>
    <property type="project" value="UniProtKB-KW"/>
</dbReference>
<dbReference type="GO" id="GO:0071555">
    <property type="term" value="P:cell wall organization"/>
    <property type="evidence" value="ECO:0007669"/>
    <property type="project" value="UniProtKB-KW"/>
</dbReference>
<dbReference type="GO" id="GO:0009252">
    <property type="term" value="P:peptidoglycan biosynthetic process"/>
    <property type="evidence" value="ECO:0007669"/>
    <property type="project" value="UniProtKB-UniRule"/>
</dbReference>
<dbReference type="GO" id="GO:0008360">
    <property type="term" value="P:regulation of cell shape"/>
    <property type="evidence" value="ECO:0007669"/>
    <property type="project" value="UniProtKB-KW"/>
</dbReference>
<dbReference type="FunFam" id="3.40.1190.10:FF:000006">
    <property type="entry name" value="UDP-N-acetylmuramoyl-L-alanyl-D-glutamate--2,6-diaminopimelate ligase"/>
    <property type="match status" value="1"/>
</dbReference>
<dbReference type="FunFam" id="3.40.1390.10:FF:000002">
    <property type="entry name" value="UDP-N-acetylmuramoyl-L-alanyl-D-glutamate--2,6-diaminopimelate ligase"/>
    <property type="match status" value="1"/>
</dbReference>
<dbReference type="FunFam" id="3.90.190.20:FF:000006">
    <property type="entry name" value="UDP-N-acetylmuramoyl-L-alanyl-D-glutamate--2,6-diaminopimelate ligase"/>
    <property type="match status" value="1"/>
</dbReference>
<dbReference type="Gene3D" id="3.90.190.20">
    <property type="entry name" value="Mur ligase, C-terminal domain"/>
    <property type="match status" value="1"/>
</dbReference>
<dbReference type="Gene3D" id="3.40.1190.10">
    <property type="entry name" value="Mur-like, catalytic domain"/>
    <property type="match status" value="1"/>
</dbReference>
<dbReference type="Gene3D" id="3.40.1390.10">
    <property type="entry name" value="MurE/MurF, N-terminal domain"/>
    <property type="match status" value="1"/>
</dbReference>
<dbReference type="HAMAP" id="MF_00208">
    <property type="entry name" value="MurE"/>
    <property type="match status" value="1"/>
</dbReference>
<dbReference type="InterPro" id="IPR036565">
    <property type="entry name" value="Mur-like_cat_sf"/>
</dbReference>
<dbReference type="InterPro" id="IPR004101">
    <property type="entry name" value="Mur_ligase_C"/>
</dbReference>
<dbReference type="InterPro" id="IPR036615">
    <property type="entry name" value="Mur_ligase_C_dom_sf"/>
</dbReference>
<dbReference type="InterPro" id="IPR013221">
    <property type="entry name" value="Mur_ligase_cen"/>
</dbReference>
<dbReference type="InterPro" id="IPR000713">
    <property type="entry name" value="Mur_ligase_N"/>
</dbReference>
<dbReference type="InterPro" id="IPR035911">
    <property type="entry name" value="MurE/MurF_N"/>
</dbReference>
<dbReference type="InterPro" id="IPR005761">
    <property type="entry name" value="UDP-N-AcMur-Glu-dNH2Pim_ligase"/>
</dbReference>
<dbReference type="NCBIfam" id="TIGR01085">
    <property type="entry name" value="murE"/>
    <property type="match status" value="1"/>
</dbReference>
<dbReference type="NCBIfam" id="NF001123">
    <property type="entry name" value="PRK00139.1-1"/>
    <property type="match status" value="1"/>
</dbReference>
<dbReference type="NCBIfam" id="NF001124">
    <property type="entry name" value="PRK00139.1-2"/>
    <property type="match status" value="1"/>
</dbReference>
<dbReference type="NCBIfam" id="NF001126">
    <property type="entry name" value="PRK00139.1-4"/>
    <property type="match status" value="1"/>
</dbReference>
<dbReference type="PANTHER" id="PTHR23135">
    <property type="entry name" value="MUR LIGASE FAMILY MEMBER"/>
    <property type="match status" value="1"/>
</dbReference>
<dbReference type="PANTHER" id="PTHR23135:SF4">
    <property type="entry name" value="UDP-N-ACETYLMURAMOYL-L-ALANYL-D-GLUTAMATE--2,6-DIAMINOPIMELATE LIGASE MURE HOMOLOG, CHLOROPLASTIC"/>
    <property type="match status" value="1"/>
</dbReference>
<dbReference type="Pfam" id="PF01225">
    <property type="entry name" value="Mur_ligase"/>
    <property type="match status" value="1"/>
</dbReference>
<dbReference type="Pfam" id="PF02875">
    <property type="entry name" value="Mur_ligase_C"/>
    <property type="match status" value="1"/>
</dbReference>
<dbReference type="Pfam" id="PF08245">
    <property type="entry name" value="Mur_ligase_M"/>
    <property type="match status" value="1"/>
</dbReference>
<dbReference type="SUPFAM" id="SSF53623">
    <property type="entry name" value="MurD-like peptide ligases, catalytic domain"/>
    <property type="match status" value="1"/>
</dbReference>
<dbReference type="SUPFAM" id="SSF53244">
    <property type="entry name" value="MurD-like peptide ligases, peptide-binding domain"/>
    <property type="match status" value="1"/>
</dbReference>
<dbReference type="SUPFAM" id="SSF63418">
    <property type="entry name" value="MurE/MurF N-terminal domain"/>
    <property type="match status" value="1"/>
</dbReference>
<sequence length="495" mass="53301">MADRNLRDLLAPWVPDAPSRALREMTLDSRVAAAGDLFVAVVGHQADGRRYIPQAIAQGVAAIIAEAKDEATDGEIREMHGVPVIYLSQLNERLSALAGRFYHEPSDNLRLVGVTGTNGKTTTTQLLAQWSQLLGEPSAVMGTVGNGLLGKVIPTENTTGSAVDVQHELAGLVDQGATFCAMEVSSHGLVQHRVAALKFAASVFTNLSRDHLDYHGDMEHYEAAKWLLYSAHHCGQAIINADDEVGRRWLAKLPDAVAVSMEDHINPNCHGRWLKATDVNYHDSGATIRFSSSWGDGEIESRLMGAFNVSNLLLALATLLALGYPLADLLKTAARLQPVCGRMEVFTAPGKPTVVVDYAHTPDALEKALQAARLHCAGKLWCVFGCGGDRDKGKRPLMGAIAEEFADVAVVTDDNPRTEEPRAIINDILAGMLDAGYAKVMEGRAEAVTCAVMQAKENDVVLVAGKGHEDYQIVGNQRLDYSDRVTVARLLGVIA</sequence>
<accession>Q8FL67</accession>